<evidence type="ECO:0000255" key="1">
    <source>
        <dbReference type="PROSITE-ProRule" id="PRU00541"/>
    </source>
</evidence>
<evidence type="ECO:0000255" key="2">
    <source>
        <dbReference type="PROSITE-ProRule" id="PRU00542"/>
    </source>
</evidence>
<evidence type="ECO:0000269" key="3">
    <source>
    </source>
</evidence>
<evidence type="ECO:0000303" key="4">
    <source>
    </source>
</evidence>
<evidence type="ECO:0000305" key="5">
    <source>
    </source>
</evidence>
<evidence type="ECO:0000312" key="6">
    <source>
        <dbReference type="EMBL" id="ABV17208.1"/>
    </source>
</evidence>
<evidence type="ECO:0007829" key="7">
    <source>
        <dbReference type="PDB" id="8QY7"/>
    </source>
</evidence>
<evidence type="ECO:0007829" key="8">
    <source>
        <dbReference type="PDB" id="8QYC"/>
    </source>
</evidence>
<feature type="chain" id="PRO_0000456344" description="Zorya protein ZorD">
    <location>
        <begin position="1"/>
        <end position="1080"/>
    </location>
</feature>
<feature type="domain" description="Helicase ATP-binding" evidence="1">
    <location>
        <begin position="596"/>
        <end position="779"/>
    </location>
</feature>
<feature type="domain" description="Helicase C-terminal" evidence="2">
    <location>
        <begin position="904"/>
        <end position="1069"/>
    </location>
</feature>
<feature type="mutagenesis site" description="No longer resistant to SECphi27." evidence="3">
    <original>DE</original>
    <variation>AA</variation>
    <location>
        <begin position="730"/>
        <end position="731"/>
    </location>
</feature>
<feature type="strand" evidence="7">
    <location>
        <begin position="24"/>
        <end position="26"/>
    </location>
</feature>
<feature type="strand" evidence="7">
    <location>
        <begin position="28"/>
        <end position="34"/>
    </location>
</feature>
<feature type="helix" evidence="7">
    <location>
        <begin position="35"/>
        <end position="37"/>
    </location>
</feature>
<feature type="helix" evidence="7">
    <location>
        <begin position="44"/>
        <end position="55"/>
    </location>
</feature>
<feature type="strand" evidence="8">
    <location>
        <begin position="59"/>
        <end position="62"/>
    </location>
</feature>
<feature type="strand" evidence="7">
    <location>
        <begin position="63"/>
        <end position="69"/>
    </location>
</feature>
<feature type="helix" evidence="7">
    <location>
        <begin position="70"/>
        <end position="78"/>
    </location>
</feature>
<feature type="turn" evidence="7">
    <location>
        <begin position="81"/>
        <end position="85"/>
    </location>
</feature>
<feature type="helix" evidence="7">
    <location>
        <begin position="86"/>
        <end position="88"/>
    </location>
</feature>
<feature type="strand" evidence="7">
    <location>
        <begin position="97"/>
        <end position="105"/>
    </location>
</feature>
<feature type="strand" evidence="7">
    <location>
        <begin position="113"/>
        <end position="121"/>
    </location>
</feature>
<feature type="turn" evidence="7">
    <location>
        <begin position="122"/>
        <end position="124"/>
    </location>
</feature>
<feature type="strand" evidence="7">
    <location>
        <begin position="131"/>
        <end position="133"/>
    </location>
</feature>
<feature type="strand" evidence="7">
    <location>
        <begin position="136"/>
        <end position="139"/>
    </location>
</feature>
<feature type="strand" evidence="8">
    <location>
        <begin position="143"/>
        <end position="145"/>
    </location>
</feature>
<feature type="helix" evidence="7">
    <location>
        <begin position="148"/>
        <end position="164"/>
    </location>
</feature>
<feature type="helix" evidence="7">
    <location>
        <begin position="170"/>
        <end position="187"/>
    </location>
</feature>
<feature type="helix" evidence="7">
    <location>
        <begin position="193"/>
        <end position="197"/>
    </location>
</feature>
<feature type="strand" evidence="7">
    <location>
        <begin position="198"/>
        <end position="201"/>
    </location>
</feature>
<feature type="strand" evidence="7">
    <location>
        <begin position="207"/>
        <end position="226"/>
    </location>
</feature>
<feature type="helix" evidence="7">
    <location>
        <begin position="234"/>
        <end position="240"/>
    </location>
</feature>
<feature type="strand" evidence="7">
    <location>
        <begin position="241"/>
        <end position="243"/>
    </location>
</feature>
<feature type="strand" evidence="7">
    <location>
        <begin position="246"/>
        <end position="251"/>
    </location>
</feature>
<feature type="strand" evidence="7">
    <location>
        <begin position="257"/>
        <end position="261"/>
    </location>
</feature>
<feature type="helix" evidence="7">
    <location>
        <begin position="264"/>
        <end position="275"/>
    </location>
</feature>
<feature type="helix" evidence="7">
    <location>
        <begin position="277"/>
        <end position="279"/>
    </location>
</feature>
<feature type="helix" evidence="7">
    <location>
        <begin position="284"/>
        <end position="291"/>
    </location>
</feature>
<feature type="helix" evidence="7">
    <location>
        <begin position="293"/>
        <end position="297"/>
    </location>
</feature>
<feature type="helix" evidence="7">
    <location>
        <begin position="301"/>
        <end position="304"/>
    </location>
</feature>
<feature type="helix" evidence="7">
    <location>
        <begin position="307"/>
        <end position="316"/>
    </location>
</feature>
<feature type="strand" evidence="7">
    <location>
        <begin position="321"/>
        <end position="328"/>
    </location>
</feature>
<feature type="strand" evidence="7">
    <location>
        <begin position="339"/>
        <end position="344"/>
    </location>
</feature>
<feature type="strand" evidence="8">
    <location>
        <begin position="347"/>
        <end position="349"/>
    </location>
</feature>
<feature type="strand" evidence="7">
    <location>
        <begin position="354"/>
        <end position="358"/>
    </location>
</feature>
<feature type="helix" evidence="7">
    <location>
        <begin position="361"/>
        <end position="376"/>
    </location>
</feature>
<feature type="strand" evidence="7">
    <location>
        <begin position="380"/>
        <end position="384"/>
    </location>
</feature>
<feature type="strand" evidence="7">
    <location>
        <begin position="387"/>
        <end position="390"/>
    </location>
</feature>
<feature type="helix" evidence="7">
    <location>
        <begin position="396"/>
        <end position="413"/>
    </location>
</feature>
<feature type="helix" evidence="7">
    <location>
        <begin position="582"/>
        <end position="595"/>
    </location>
</feature>
<feature type="turn" evidence="7">
    <location>
        <begin position="596"/>
        <end position="601"/>
    </location>
</feature>
<feature type="strand" evidence="7">
    <location>
        <begin position="603"/>
        <end position="607"/>
    </location>
</feature>
<feature type="helix" evidence="7">
    <location>
        <begin position="615"/>
        <end position="629"/>
    </location>
</feature>
<feature type="strand" evidence="7">
    <location>
        <begin position="636"/>
        <end position="639"/>
    </location>
</feature>
<feature type="helix" evidence="7">
    <location>
        <begin position="642"/>
        <end position="655"/>
    </location>
</feature>
<feature type="helix" evidence="7">
    <location>
        <begin position="658"/>
        <end position="660"/>
    </location>
</feature>
<feature type="strand" evidence="7">
    <location>
        <begin position="663"/>
        <end position="667"/>
    </location>
</feature>
<feature type="helix" evidence="7">
    <location>
        <begin position="669"/>
        <end position="673"/>
    </location>
</feature>
<feature type="helix" evidence="7">
    <location>
        <begin position="683"/>
        <end position="687"/>
    </location>
</feature>
<feature type="turn" evidence="8">
    <location>
        <begin position="696"/>
        <end position="701"/>
    </location>
</feature>
<feature type="strand" evidence="7">
    <location>
        <begin position="703"/>
        <end position="707"/>
    </location>
</feature>
<feature type="helix" evidence="7">
    <location>
        <begin position="709"/>
        <end position="714"/>
    </location>
</feature>
<feature type="helix" evidence="7">
    <location>
        <begin position="716"/>
        <end position="721"/>
    </location>
</feature>
<feature type="strand" evidence="7">
    <location>
        <begin position="724"/>
        <end position="731"/>
    </location>
</feature>
<feature type="helix" evidence="7">
    <location>
        <begin position="732"/>
        <end position="735"/>
    </location>
</feature>
<feature type="helix" evidence="7">
    <location>
        <begin position="741"/>
        <end position="748"/>
    </location>
</feature>
<feature type="strand" evidence="7">
    <location>
        <begin position="751"/>
        <end position="757"/>
    </location>
</feature>
<feature type="strand" evidence="7">
    <location>
        <begin position="763"/>
        <end position="765"/>
    </location>
</feature>
<feature type="helix" evidence="7">
    <location>
        <begin position="766"/>
        <end position="776"/>
    </location>
</feature>
<feature type="helix" evidence="7">
    <location>
        <begin position="784"/>
        <end position="791"/>
    </location>
</feature>
<feature type="turn" evidence="7">
    <location>
        <begin position="792"/>
        <end position="795"/>
    </location>
</feature>
<feature type="helix" evidence="7">
    <location>
        <begin position="804"/>
        <end position="813"/>
    </location>
</feature>
<feature type="turn" evidence="7">
    <location>
        <begin position="814"/>
        <end position="816"/>
    </location>
</feature>
<feature type="turn" evidence="7">
    <location>
        <begin position="822"/>
        <end position="824"/>
    </location>
</feature>
<feature type="strand" evidence="7">
    <location>
        <begin position="832"/>
        <end position="834"/>
    </location>
</feature>
<feature type="helix" evidence="7">
    <location>
        <begin position="837"/>
        <end position="840"/>
    </location>
</feature>
<feature type="helix" evidence="7">
    <location>
        <begin position="845"/>
        <end position="863"/>
    </location>
</feature>
<feature type="helix" evidence="7">
    <location>
        <begin position="875"/>
        <end position="887"/>
    </location>
</feature>
<feature type="helix" evidence="7">
    <location>
        <begin position="889"/>
        <end position="892"/>
    </location>
</feature>
<feature type="helix" evidence="7">
    <location>
        <begin position="896"/>
        <end position="899"/>
    </location>
</feature>
<feature type="helix" evidence="7">
    <location>
        <begin position="903"/>
        <end position="918"/>
    </location>
</feature>
<feature type="strand" evidence="7">
    <location>
        <begin position="922"/>
        <end position="926"/>
    </location>
</feature>
<feature type="helix" evidence="7">
    <location>
        <begin position="930"/>
        <end position="944"/>
    </location>
</feature>
<feature type="strand" evidence="7">
    <location>
        <begin position="949"/>
        <end position="951"/>
    </location>
</feature>
<feature type="strand" evidence="7">
    <location>
        <begin position="956"/>
        <end position="959"/>
    </location>
</feature>
<feature type="helix" evidence="7">
    <location>
        <begin position="960"/>
        <end position="974"/>
    </location>
</feature>
<feature type="strand" evidence="7">
    <location>
        <begin position="979"/>
        <end position="983"/>
    </location>
</feature>
<feature type="turn" evidence="8">
    <location>
        <begin position="985"/>
        <end position="987"/>
    </location>
</feature>
<feature type="strand" evidence="7">
    <location>
        <begin position="988"/>
        <end position="990"/>
    </location>
</feature>
<feature type="strand" evidence="7">
    <location>
        <begin position="996"/>
        <end position="1004"/>
    </location>
</feature>
<feature type="helix" evidence="7">
    <location>
        <begin position="1009"/>
        <end position="1016"/>
    </location>
</feature>
<feature type="strand" evidence="7">
    <location>
        <begin position="1019"/>
        <end position="1021"/>
    </location>
</feature>
<feature type="strand" evidence="7">
    <location>
        <begin position="1028"/>
        <end position="1031"/>
    </location>
</feature>
<feature type="strand" evidence="7">
    <location>
        <begin position="1038"/>
        <end position="1040"/>
    </location>
</feature>
<feature type="helix" evidence="7">
    <location>
        <begin position="1043"/>
        <end position="1058"/>
    </location>
</feature>
<feature type="strand" evidence="7">
    <location>
        <begin position="1060"/>
        <end position="1062"/>
    </location>
</feature>
<feature type="helix" evidence="7">
    <location>
        <begin position="1070"/>
        <end position="1074"/>
    </location>
</feature>
<feature type="helix" evidence="7">
    <location>
        <begin position="1075"/>
        <end position="1078"/>
    </location>
</feature>
<name>ZORD_ECO24</name>
<keyword id="KW-0002">3D-structure</keyword>
<keyword id="KW-0051">Antiviral defense</keyword>
<keyword id="KW-0067">ATP-binding</keyword>
<keyword id="KW-0347">Helicase</keyword>
<keyword id="KW-0378">Hydrolase</keyword>
<keyword id="KW-0547">Nucleotide-binding</keyword>
<keyword id="KW-1185">Reference proteome</keyword>
<accession>A7ZI07</accession>
<dbReference type="EMBL" id="CP000800">
    <property type="protein sequence ID" value="ABV17208.1"/>
    <property type="molecule type" value="Genomic_DNA"/>
</dbReference>
<dbReference type="RefSeq" id="WP_000919796.1">
    <property type="nucleotide sequence ID" value="NC_009801.1"/>
</dbReference>
<dbReference type="PDB" id="8QY7">
    <property type="method" value="EM"/>
    <property type="resolution" value="2.66 A"/>
    <property type="chains" value="A=1-1080"/>
</dbReference>
<dbReference type="PDB" id="8QYC">
    <property type="method" value="EM"/>
    <property type="resolution" value="2.75 A"/>
    <property type="chains" value="A=1-1080"/>
</dbReference>
<dbReference type="PDBsum" id="8QY7"/>
<dbReference type="PDBsum" id="8QYC"/>
<dbReference type="SMR" id="A7ZI07"/>
<dbReference type="KEGG" id="ecw:EcE24377A_0282"/>
<dbReference type="HOGENOM" id="CLU_000315_21_6_6"/>
<dbReference type="Proteomes" id="UP000001122">
    <property type="component" value="Chromosome"/>
</dbReference>
<dbReference type="GO" id="GO:0005524">
    <property type="term" value="F:ATP binding"/>
    <property type="evidence" value="ECO:0007669"/>
    <property type="project" value="UniProtKB-KW"/>
</dbReference>
<dbReference type="GO" id="GO:0004386">
    <property type="term" value="F:helicase activity"/>
    <property type="evidence" value="ECO:0007669"/>
    <property type="project" value="UniProtKB-KW"/>
</dbReference>
<dbReference type="GO" id="GO:0016787">
    <property type="term" value="F:hydrolase activity"/>
    <property type="evidence" value="ECO:0007669"/>
    <property type="project" value="UniProtKB-KW"/>
</dbReference>
<dbReference type="GO" id="GO:0051607">
    <property type="term" value="P:defense response to virus"/>
    <property type="evidence" value="ECO:0007669"/>
    <property type="project" value="UniProtKB-KW"/>
</dbReference>
<dbReference type="CDD" id="cd18793">
    <property type="entry name" value="SF2_C_SNF"/>
    <property type="match status" value="1"/>
</dbReference>
<dbReference type="Gene3D" id="3.40.50.300">
    <property type="entry name" value="P-loop containing nucleotide triphosphate hydrolases"/>
    <property type="match status" value="1"/>
</dbReference>
<dbReference type="Gene3D" id="3.40.50.10810">
    <property type="entry name" value="Tandem AAA-ATPase domain"/>
    <property type="match status" value="1"/>
</dbReference>
<dbReference type="InterPro" id="IPR014001">
    <property type="entry name" value="Helicase_ATP-bd"/>
</dbReference>
<dbReference type="InterPro" id="IPR001650">
    <property type="entry name" value="Helicase_C-like"/>
</dbReference>
<dbReference type="InterPro" id="IPR027417">
    <property type="entry name" value="P-loop_NTPase"/>
</dbReference>
<dbReference type="InterPro" id="IPR038718">
    <property type="entry name" value="SNF2-like_sf"/>
</dbReference>
<dbReference type="InterPro" id="IPR049730">
    <property type="entry name" value="SNF2/RAD54-like_C"/>
</dbReference>
<dbReference type="InterPro" id="IPR000330">
    <property type="entry name" value="SNF2_N"/>
</dbReference>
<dbReference type="InterPro" id="IPR050496">
    <property type="entry name" value="SNF2_RAD54_helicase_repair"/>
</dbReference>
<dbReference type="InterPro" id="IPR049660">
    <property type="entry name" value="ZorD-like_t1"/>
</dbReference>
<dbReference type="NCBIfam" id="NF041790">
    <property type="entry name" value="anti-phage_ZorD"/>
    <property type="match status" value="1"/>
</dbReference>
<dbReference type="PANTHER" id="PTHR45629:SF7">
    <property type="entry name" value="DNA EXCISION REPAIR PROTEIN ERCC-6-RELATED"/>
    <property type="match status" value="1"/>
</dbReference>
<dbReference type="PANTHER" id="PTHR45629">
    <property type="entry name" value="SNF2/RAD54 FAMILY MEMBER"/>
    <property type="match status" value="1"/>
</dbReference>
<dbReference type="Pfam" id="PF00271">
    <property type="entry name" value="Helicase_C"/>
    <property type="match status" value="1"/>
</dbReference>
<dbReference type="Pfam" id="PF00176">
    <property type="entry name" value="SNF2-rel_dom"/>
    <property type="match status" value="1"/>
</dbReference>
<dbReference type="SMART" id="SM00487">
    <property type="entry name" value="DEXDc"/>
    <property type="match status" value="1"/>
</dbReference>
<dbReference type="SMART" id="SM00490">
    <property type="entry name" value="HELICc"/>
    <property type="match status" value="1"/>
</dbReference>
<dbReference type="SUPFAM" id="SSF52540">
    <property type="entry name" value="P-loop containing nucleoside triphosphate hydrolases"/>
    <property type="match status" value="2"/>
</dbReference>
<dbReference type="PROSITE" id="PS51192">
    <property type="entry name" value="HELICASE_ATP_BIND_1"/>
    <property type="match status" value="1"/>
</dbReference>
<dbReference type="PROSITE" id="PS51194">
    <property type="entry name" value="HELICASE_CTER"/>
    <property type="match status" value="1"/>
</dbReference>
<protein>
    <recommendedName>
        <fullName evidence="4">Zorya protein ZorD</fullName>
    </recommendedName>
    <alternativeName>
        <fullName evidence="4">Probable ATPase ZorD</fullName>
    </alternativeName>
</protein>
<sequence length="1080" mass="122363">MLKRLLSKLTGNRQQIEHHLKNQYQVEENGLSFPLSLVDDSQLWALASWLEQLAEEDYLISLTDRWLLSWDALYRLLEDEEHASSLPLIGVPDVLPLRASLSSRGALSDSDFRVWIAEWATLPARKPIRFSRTGAILTHENQQYLLSRENWALLQATEQLSAQKNQTPGETTNQLGWAAIRKCAKQAAAKFDDYLEKTHVVKPTSLSLRLRKATVADTAVIEIEPHFEDQPANWLGSFDKNSQVHDSYRIPGENGELSHVIIPPEVKEVLNSIHSIPSRRVAGSEALSFVRNPYTFLGEDAASVIAPEEHEQALFDARIFFHHFRLIPQLNAENKIAEVTLVLEPVSPVPQPEITFGFSAPRELDKFIQQLGISVAAQMPAGSWQGYELELSQFTEQQWHDCQALLTRWQQEIEGKEFSDVLDIAKYGDRVIGIGEFEKISSPWLTKAQSENWLPDDIDFSAFSVETLSGWQPENLHHFDELQERITQAEAVGETHITAPWNDSQLPLDAAKTFSKNWEKQQSTANESQGNVADKTARAVLKIEQNIEETAYIKQRRNSLLNARHAEPEIPLSLKEHIRLKDHQREGVAWLQQLFLRSPEETAGCLLADDMGLGKTLQILSFLVWFIEKFPQEPPSLIVAPVSLLDNWERELDNFFYTAGIPVLKLYGETIKAVKYPKQAIPAHLQSQGIKNLLKPGWQGEAKIILTTYETLRDQEFSLARQPWSIMVCDEAQKIKNPAALITHAANAVQARFKVACTGTPVENTLVDLWSLFDFAQPGLLGALNEFGKHYVRPIENEDGRDTERLESLRALIEPQTLRRTKEEVARDLPQKIEVESCKQLTLSGVQKQLYLSSVANWQQQQALSEGMQQAGTGMLGLLHRLKLICAHPAVVNPEPRFRDNSPKLNWLLKILAELKHTTKDKVIIFTELRDLQRELQHAIHQKFGFRPVIINGDTSTKSQSQNSRQRLIDDFQAQPGFGVIILSTVAVGFGVNVQKANHVIHFTRCWNPAKEDQATDRAYRIGQTKDVYVYYPTVKDTEITTFEETLDDLLQRRRALARDMLCATPDLSGADFEAILKGA</sequence>
<reference evidence="6" key="1">
    <citation type="journal article" date="2008" name="J. Bacteriol.">
        <title>The pangenome structure of Escherichia coli: comparative genomic analysis of E. coli commensal and pathogenic isolates.</title>
        <authorList>
            <person name="Rasko D.A."/>
            <person name="Rosovitz M.J."/>
            <person name="Myers G.S.A."/>
            <person name="Mongodin E.F."/>
            <person name="Fricke W.F."/>
            <person name="Gajer P."/>
            <person name="Crabtree J."/>
            <person name="Sebaihia M."/>
            <person name="Thomson N.R."/>
            <person name="Chaudhuri R."/>
            <person name="Henderson I.R."/>
            <person name="Sperandio V."/>
            <person name="Ravel J."/>
        </authorList>
    </citation>
    <scope>NUCLEOTIDE SEQUENCE [LARGE SCALE GENOMIC DNA]</scope>
    <source>
        <strain>E24377A / ETEC</strain>
    </source>
</reference>
<reference key="2">
    <citation type="journal article" date="2018" name="Science">
        <title>Systematic discovery of antiphage defense systems in the microbial pangenome.</title>
        <authorList>
            <person name="Doron S."/>
            <person name="Melamed S."/>
            <person name="Ofir G."/>
            <person name="Leavitt A."/>
            <person name="Lopatina A."/>
            <person name="Keren M."/>
            <person name="Amitai G."/>
            <person name="Sorek R."/>
        </authorList>
    </citation>
    <scope>FUNCTION</scope>
    <scope>DISRUPTION PHENOTYPE</scope>
    <scope>MUTAGENESIS OF 730-ASP-GLU-731</scope>
    <source>
        <strain>E24377A / ETEC</strain>
    </source>
</reference>
<organism>
    <name type="scientific">Escherichia coli O139:H28 (strain E24377A / ETEC)</name>
    <dbReference type="NCBI Taxonomy" id="331111"/>
    <lineage>
        <taxon>Bacteria</taxon>
        <taxon>Pseudomonadati</taxon>
        <taxon>Pseudomonadota</taxon>
        <taxon>Gammaproteobacteria</taxon>
        <taxon>Enterobacterales</taxon>
        <taxon>Enterobacteriaceae</taxon>
        <taxon>Escherichia</taxon>
    </lineage>
</organism>
<comment type="function">
    <text evidence="3 5">Component of antiviral defense system Zorya type I, composed of ZorA, ZorB, ZorC and ZorD. Expression of Zorya type I in E.coli (strain MG1655) confers 10,000-fold resistance to phage SECphi27, 100-fold resistance to lambda, and 10-fold resistance to T7. While most T7 infected Zorya-containing cells undergo abortive infection, a minority produce viable phage progeny. These eventually accumulate to a high multiplicity of infection, leading to culture collapse by 2 hours after initial infection (PubMed:29371424). ZorA and ZorB probably assemble in the cell inner membrane and exert their effect there. This may have ATPase activity (Probable).</text>
</comment>
<comment type="disruption phenotype">
    <text evidence="3">When this gene is missing the Zorya system does not confer resistance to SECphi27 in E.coli.</text>
</comment>
<gene>
    <name evidence="4" type="primary">zorD</name>
    <name evidence="6" type="ordered locus">EcE24377A_0282</name>
</gene>
<proteinExistence type="evidence at protein level"/>